<accession>A3MRB1</accession>
<reference key="1">
    <citation type="journal article" date="2010" name="Genome Biol. Evol.">
        <title>Continuing evolution of Burkholderia mallei through genome reduction and large-scale rearrangements.</title>
        <authorList>
            <person name="Losada L."/>
            <person name="Ronning C.M."/>
            <person name="DeShazer D."/>
            <person name="Woods D."/>
            <person name="Fedorova N."/>
            <person name="Kim H.S."/>
            <person name="Shabalina S.A."/>
            <person name="Pearson T.R."/>
            <person name="Brinkac L."/>
            <person name="Tan P."/>
            <person name="Nandi T."/>
            <person name="Crabtree J."/>
            <person name="Badger J."/>
            <person name="Beckstrom-Sternberg S."/>
            <person name="Saqib M."/>
            <person name="Schutzer S.E."/>
            <person name="Keim P."/>
            <person name="Nierman W.C."/>
        </authorList>
    </citation>
    <scope>NUCLEOTIDE SEQUENCE [LARGE SCALE GENOMIC DNA]</scope>
    <source>
        <strain>NCTC 10247</strain>
    </source>
</reference>
<comment type="function">
    <text evidence="1">Methylates ribosomal protein L11.</text>
</comment>
<comment type="catalytic activity">
    <reaction evidence="1">
        <text>L-lysyl-[protein] + 3 S-adenosyl-L-methionine = N(6),N(6),N(6)-trimethyl-L-lysyl-[protein] + 3 S-adenosyl-L-homocysteine + 3 H(+)</text>
        <dbReference type="Rhea" id="RHEA:54192"/>
        <dbReference type="Rhea" id="RHEA-COMP:9752"/>
        <dbReference type="Rhea" id="RHEA-COMP:13826"/>
        <dbReference type="ChEBI" id="CHEBI:15378"/>
        <dbReference type="ChEBI" id="CHEBI:29969"/>
        <dbReference type="ChEBI" id="CHEBI:57856"/>
        <dbReference type="ChEBI" id="CHEBI:59789"/>
        <dbReference type="ChEBI" id="CHEBI:61961"/>
    </reaction>
</comment>
<comment type="subcellular location">
    <subcellularLocation>
        <location evidence="1">Cytoplasm</location>
    </subcellularLocation>
</comment>
<comment type="similarity">
    <text evidence="1">Belongs to the methyltransferase superfamily. PrmA family.</text>
</comment>
<organism>
    <name type="scientific">Burkholderia mallei (strain NCTC 10247)</name>
    <dbReference type="NCBI Taxonomy" id="320389"/>
    <lineage>
        <taxon>Bacteria</taxon>
        <taxon>Pseudomonadati</taxon>
        <taxon>Pseudomonadota</taxon>
        <taxon>Betaproteobacteria</taxon>
        <taxon>Burkholderiales</taxon>
        <taxon>Burkholderiaceae</taxon>
        <taxon>Burkholderia</taxon>
        <taxon>pseudomallei group</taxon>
    </lineage>
</organism>
<protein>
    <recommendedName>
        <fullName evidence="1">Ribosomal protein L11 methyltransferase</fullName>
        <shortName evidence="1">L11 Mtase</shortName>
        <ecNumber evidence="1">2.1.1.-</ecNumber>
    </recommendedName>
</protein>
<gene>
    <name evidence="1" type="primary">prmA</name>
    <name type="ordered locus">BMA10247_3281</name>
</gene>
<name>PRMA_BURM7</name>
<evidence type="ECO:0000255" key="1">
    <source>
        <dbReference type="HAMAP-Rule" id="MF_00735"/>
    </source>
</evidence>
<keyword id="KW-0963">Cytoplasm</keyword>
<keyword id="KW-0489">Methyltransferase</keyword>
<keyword id="KW-0949">S-adenosyl-L-methionine</keyword>
<keyword id="KW-0808">Transferase</keyword>
<dbReference type="EC" id="2.1.1.-" evidence="1"/>
<dbReference type="EMBL" id="CP000548">
    <property type="protein sequence ID" value="ABO06840.1"/>
    <property type="molecule type" value="Genomic_DNA"/>
</dbReference>
<dbReference type="RefSeq" id="WP_004194259.1">
    <property type="nucleotide sequence ID" value="NZ_CP007802.1"/>
</dbReference>
<dbReference type="SMR" id="A3MRB1"/>
<dbReference type="GeneID" id="92980193"/>
<dbReference type="KEGG" id="bmaz:BM44_88"/>
<dbReference type="KEGG" id="bmn:BMA10247_3281"/>
<dbReference type="PATRIC" id="fig|320389.8.peg.95"/>
<dbReference type="GO" id="GO:0005829">
    <property type="term" value="C:cytosol"/>
    <property type="evidence" value="ECO:0007669"/>
    <property type="project" value="TreeGrafter"/>
</dbReference>
<dbReference type="GO" id="GO:0016279">
    <property type="term" value="F:protein-lysine N-methyltransferase activity"/>
    <property type="evidence" value="ECO:0007669"/>
    <property type="project" value="TreeGrafter"/>
</dbReference>
<dbReference type="GO" id="GO:0032259">
    <property type="term" value="P:methylation"/>
    <property type="evidence" value="ECO:0007669"/>
    <property type="project" value="UniProtKB-KW"/>
</dbReference>
<dbReference type="CDD" id="cd02440">
    <property type="entry name" value="AdoMet_MTases"/>
    <property type="match status" value="1"/>
</dbReference>
<dbReference type="Gene3D" id="3.40.50.150">
    <property type="entry name" value="Vaccinia Virus protein VP39"/>
    <property type="match status" value="1"/>
</dbReference>
<dbReference type="HAMAP" id="MF_00735">
    <property type="entry name" value="Methyltr_PrmA"/>
    <property type="match status" value="1"/>
</dbReference>
<dbReference type="InterPro" id="IPR050078">
    <property type="entry name" value="Ribosomal_L11_MeTrfase_PrmA"/>
</dbReference>
<dbReference type="InterPro" id="IPR004498">
    <property type="entry name" value="Ribosomal_PrmA_MeTrfase"/>
</dbReference>
<dbReference type="InterPro" id="IPR029063">
    <property type="entry name" value="SAM-dependent_MTases_sf"/>
</dbReference>
<dbReference type="NCBIfam" id="TIGR00406">
    <property type="entry name" value="prmA"/>
    <property type="match status" value="1"/>
</dbReference>
<dbReference type="PANTHER" id="PTHR43648">
    <property type="entry name" value="ELECTRON TRANSFER FLAVOPROTEIN BETA SUBUNIT LYSINE METHYLTRANSFERASE"/>
    <property type="match status" value="1"/>
</dbReference>
<dbReference type="PANTHER" id="PTHR43648:SF1">
    <property type="entry name" value="ELECTRON TRANSFER FLAVOPROTEIN BETA SUBUNIT LYSINE METHYLTRANSFERASE"/>
    <property type="match status" value="1"/>
</dbReference>
<dbReference type="Pfam" id="PF06325">
    <property type="entry name" value="PrmA"/>
    <property type="match status" value="1"/>
</dbReference>
<dbReference type="PIRSF" id="PIRSF000401">
    <property type="entry name" value="RPL11_MTase"/>
    <property type="match status" value="1"/>
</dbReference>
<dbReference type="SUPFAM" id="SSF53335">
    <property type="entry name" value="S-adenosyl-L-methionine-dependent methyltransferases"/>
    <property type="match status" value="1"/>
</dbReference>
<proteinExistence type="inferred from homology"/>
<sequence length="300" mass="32596">MSYRELVAELPREHAEALSDALVELGALSVSVEDADADTPDEQPLFGEPGLVPERTAWQHSRVIALVDATQDPAVLLAAAANEAGLAQTPRFELREVEEQDWVRLTQSQFEPIHIGEKIWVVPSWHDAPQPDALVLELDPGLAFGTGSHPTTRLCMEWLEQTVQPGQTVLDYGCGSGILAILAKKCGAGRVTGIDIDPQAVEAARHNSERNRADVTYGLPDDCPDGEFDIVVANILSNPLKLMASMLASKVKPGGRIALSGVLARQADEVASVYARYIDIAVWREHEGWVCLAGTRRESH</sequence>
<feature type="chain" id="PRO_1000045993" description="Ribosomal protein L11 methyltransferase">
    <location>
        <begin position="1"/>
        <end position="300"/>
    </location>
</feature>
<feature type="binding site" evidence="1">
    <location>
        <position position="152"/>
    </location>
    <ligand>
        <name>S-adenosyl-L-methionine</name>
        <dbReference type="ChEBI" id="CHEBI:59789"/>
    </ligand>
</feature>
<feature type="binding site" evidence="1">
    <location>
        <position position="173"/>
    </location>
    <ligand>
        <name>S-adenosyl-L-methionine</name>
        <dbReference type="ChEBI" id="CHEBI:59789"/>
    </ligand>
</feature>
<feature type="binding site" evidence="1">
    <location>
        <position position="195"/>
    </location>
    <ligand>
        <name>S-adenosyl-L-methionine</name>
        <dbReference type="ChEBI" id="CHEBI:59789"/>
    </ligand>
</feature>
<feature type="binding site" evidence="1">
    <location>
        <position position="234"/>
    </location>
    <ligand>
        <name>S-adenosyl-L-methionine</name>
        <dbReference type="ChEBI" id="CHEBI:59789"/>
    </ligand>
</feature>